<comment type="function">
    <text evidence="1">DNA-binding global transcriptional regulator which is involved in the adaptive response to starvation and acts by directly or indirectly controlling the expression of numerous genes in response to nutrient availability. During rapid exponential growth, CodY is highly active and represses genes whose products allow adaptation to nutrient depletion.</text>
</comment>
<comment type="subcellular location">
    <subcellularLocation>
        <location evidence="1">Cytoplasm</location>
    </subcellularLocation>
</comment>
<comment type="similarity">
    <text evidence="1">Belongs to the CodY family.</text>
</comment>
<sequence>MSSLLDKTRMLNRILQKSGTEPVDFEDICDLLSDVLACNVYIISRKGKILGSKFYSGFECDEVREVVLKENRFPDFYNNKLLNVNETLSNSPNHDKCVFDNLKDCSINNKLSTIVPINGNRERLGTLLLARFDKEFTDEDLVLAEYSATIIGLEILRSKQDQIEEEARKKAVVQLAIGTLSYSELEAVEHIFNELDGTEGLLVASKIADKVGITRSVIVNALRKFESAGVIESRSLGMKGTHIRILNDKLLEELKKIK</sequence>
<proteinExistence type="inferred from homology"/>
<reference key="1">
    <citation type="submission" date="2008-05" db="EMBL/GenBank/DDBJ databases">
        <title>Genome sequence of Clostridium botulinum Ba4 strain 657.</title>
        <authorList>
            <person name="Shrivastava S."/>
            <person name="Brown J.L."/>
            <person name="Bruce D."/>
            <person name="Detter C."/>
            <person name="Munk C."/>
            <person name="Smith L.A."/>
            <person name="Smith T.J."/>
            <person name="Sutton G."/>
            <person name="Brettin T.S."/>
        </authorList>
    </citation>
    <scope>NUCLEOTIDE SEQUENCE [LARGE SCALE GENOMIC DNA]</scope>
    <source>
        <strain>657 / Type Ba4</strain>
    </source>
</reference>
<keyword id="KW-0963">Cytoplasm</keyword>
<keyword id="KW-0238">DNA-binding</keyword>
<keyword id="KW-0678">Repressor</keyword>
<keyword id="KW-0804">Transcription</keyword>
<keyword id="KW-0805">Transcription regulation</keyword>
<dbReference type="EMBL" id="CP001083">
    <property type="protein sequence ID" value="ACQ52684.1"/>
    <property type="molecule type" value="Genomic_DNA"/>
</dbReference>
<dbReference type="RefSeq" id="WP_003362579.1">
    <property type="nucleotide sequence ID" value="NC_012658.1"/>
</dbReference>
<dbReference type="SMR" id="C3L0D4"/>
<dbReference type="GeneID" id="92939187"/>
<dbReference type="KEGG" id="cbi:CLJ_B2661"/>
<dbReference type="HOGENOM" id="CLU_089581_0_0_9"/>
<dbReference type="Proteomes" id="UP000002333">
    <property type="component" value="Chromosome"/>
</dbReference>
<dbReference type="GO" id="GO:0005737">
    <property type="term" value="C:cytoplasm"/>
    <property type="evidence" value="ECO:0007669"/>
    <property type="project" value="UniProtKB-SubCell"/>
</dbReference>
<dbReference type="GO" id="GO:0003677">
    <property type="term" value="F:DNA binding"/>
    <property type="evidence" value="ECO:0007669"/>
    <property type="project" value="UniProtKB-UniRule"/>
</dbReference>
<dbReference type="GO" id="GO:0003700">
    <property type="term" value="F:DNA-binding transcription factor activity"/>
    <property type="evidence" value="ECO:0007669"/>
    <property type="project" value="InterPro"/>
</dbReference>
<dbReference type="GO" id="GO:0005525">
    <property type="term" value="F:GTP binding"/>
    <property type="evidence" value="ECO:0007669"/>
    <property type="project" value="InterPro"/>
</dbReference>
<dbReference type="GO" id="GO:0045892">
    <property type="term" value="P:negative regulation of DNA-templated transcription"/>
    <property type="evidence" value="ECO:0007669"/>
    <property type="project" value="UniProtKB-UniRule"/>
</dbReference>
<dbReference type="FunFam" id="1.10.10.10:FF:000034">
    <property type="entry name" value="GTP-sensing transcriptional pleiotropic repressor CodY"/>
    <property type="match status" value="1"/>
</dbReference>
<dbReference type="FunFam" id="3.30.450.40:FF:000003">
    <property type="entry name" value="GTP-sensing transcriptional pleiotropic repressor CodY"/>
    <property type="match status" value="1"/>
</dbReference>
<dbReference type="Gene3D" id="3.30.450.40">
    <property type="match status" value="1"/>
</dbReference>
<dbReference type="Gene3D" id="1.10.10.10">
    <property type="entry name" value="Winged helix-like DNA-binding domain superfamily/Winged helix DNA-binding domain"/>
    <property type="match status" value="1"/>
</dbReference>
<dbReference type="HAMAP" id="MF_00621">
    <property type="entry name" value="HTH_type_CodY"/>
    <property type="match status" value="1"/>
</dbReference>
<dbReference type="InterPro" id="IPR014154">
    <property type="entry name" value="CodY"/>
</dbReference>
<dbReference type="InterPro" id="IPR029016">
    <property type="entry name" value="GAF-like_dom_sf"/>
</dbReference>
<dbReference type="InterPro" id="IPR013198">
    <property type="entry name" value="GTP_trans_reg_CodY_C"/>
</dbReference>
<dbReference type="InterPro" id="IPR010312">
    <property type="entry name" value="Transc_reg_CodY_N"/>
</dbReference>
<dbReference type="InterPro" id="IPR036388">
    <property type="entry name" value="WH-like_DNA-bd_sf"/>
</dbReference>
<dbReference type="InterPro" id="IPR036390">
    <property type="entry name" value="WH_DNA-bd_sf"/>
</dbReference>
<dbReference type="NCBIfam" id="TIGR02787">
    <property type="entry name" value="codY_Gpos"/>
    <property type="match status" value="1"/>
</dbReference>
<dbReference type="NCBIfam" id="NF003170">
    <property type="entry name" value="PRK04158.1"/>
    <property type="match status" value="1"/>
</dbReference>
<dbReference type="PANTHER" id="PTHR40062:SF1">
    <property type="entry name" value="GLOBAL TRANSCRIPTIONAL REGULATOR CODY"/>
    <property type="match status" value="1"/>
</dbReference>
<dbReference type="PANTHER" id="PTHR40062">
    <property type="entry name" value="GTP-SENSING TRANSCRIPTIONAL PLEIOTROPIC REPRESSOR CODY"/>
    <property type="match status" value="1"/>
</dbReference>
<dbReference type="Pfam" id="PF06018">
    <property type="entry name" value="CodY"/>
    <property type="match status" value="1"/>
</dbReference>
<dbReference type="Pfam" id="PF08222">
    <property type="entry name" value="HTH_CodY"/>
    <property type="match status" value="1"/>
</dbReference>
<dbReference type="PIRSF" id="PIRSF011572">
    <property type="entry name" value="GTP_sensing_CodY"/>
    <property type="match status" value="1"/>
</dbReference>
<dbReference type="SUPFAM" id="SSF55781">
    <property type="entry name" value="GAF domain-like"/>
    <property type="match status" value="1"/>
</dbReference>
<dbReference type="SUPFAM" id="SSF46785">
    <property type="entry name" value="Winged helix' DNA-binding domain"/>
    <property type="match status" value="1"/>
</dbReference>
<accession>C3L0D4</accession>
<protein>
    <recommendedName>
        <fullName evidence="1">Global transcriptional regulator CodY</fullName>
    </recommendedName>
</protein>
<name>CODY_CLOB6</name>
<organism>
    <name type="scientific">Clostridium botulinum (strain 657 / Type Ba4)</name>
    <dbReference type="NCBI Taxonomy" id="515621"/>
    <lineage>
        <taxon>Bacteria</taxon>
        <taxon>Bacillati</taxon>
        <taxon>Bacillota</taxon>
        <taxon>Clostridia</taxon>
        <taxon>Eubacteriales</taxon>
        <taxon>Clostridiaceae</taxon>
        <taxon>Clostridium</taxon>
    </lineage>
</organism>
<feature type="chain" id="PRO_1000212284" description="Global transcriptional regulator CodY">
    <location>
        <begin position="1"/>
        <end position="258"/>
    </location>
</feature>
<feature type="DNA-binding region" description="H-T-H motif" evidence="1">
    <location>
        <begin position="204"/>
        <end position="223"/>
    </location>
</feature>
<feature type="region of interest" description="GAF domain" evidence="1">
    <location>
        <begin position="1"/>
        <end position="156"/>
    </location>
</feature>
<gene>
    <name evidence="1" type="primary">codY</name>
    <name type="ordered locus">CLJ_B2661</name>
</gene>
<evidence type="ECO:0000255" key="1">
    <source>
        <dbReference type="HAMAP-Rule" id="MF_00621"/>
    </source>
</evidence>